<evidence type="ECO:0000250" key="1">
    <source>
        <dbReference type="UniProtKB" id="P81929"/>
    </source>
</evidence>
<evidence type="ECO:0000269" key="2">
    <source>
    </source>
</evidence>
<evidence type="ECO:0000303" key="3">
    <source>
    </source>
</evidence>
<evidence type="ECO:0000305" key="4"/>
<evidence type="ECO:0000305" key="5">
    <source>
    </source>
</evidence>
<sequence length="72" mass="8308">MEKKMAGFCIFFLVLFLAQEYGVEGKVCLNLSDKFKGPCLGTKNCDHHCRDIEHLLSGVCRDDFRCWCNRNC</sequence>
<feature type="signal peptide" evidence="2">
    <location>
        <begin position="1"/>
        <end position="25"/>
    </location>
</feature>
<feature type="chain" id="PRO_0000435961" description="Defensin 3" evidence="2">
    <location>
        <begin position="26"/>
        <end position="72"/>
    </location>
</feature>
<feature type="disulfide bond" evidence="1">
    <location>
        <begin position="28"/>
        <end position="72"/>
    </location>
</feature>
<feature type="disulfide bond" evidence="1">
    <location>
        <begin position="39"/>
        <end position="60"/>
    </location>
</feature>
<feature type="disulfide bond" evidence="1">
    <location>
        <begin position="45"/>
        <end position="66"/>
    </location>
</feature>
<comment type="function">
    <text evidence="2">Probably has antifungal activity.</text>
</comment>
<comment type="subunit">
    <text evidence="2">May form dimers.</text>
</comment>
<comment type="PTM">
    <text evidence="2">Not glycosylated.</text>
</comment>
<comment type="PTM">
    <text evidence="2">Has 4 disulfide bonds.</text>
</comment>
<comment type="mass spectrometry" mass="5442.4" method="Electrospray" evidence="2"/>
<comment type="allergen">
    <text evidence="2">Causes an allergic reaction in human. Binds to IgE.</text>
</comment>
<comment type="similarity">
    <text evidence="4">Belongs to the DEFL family.</text>
</comment>
<reference evidence="4" key="1">
    <citation type="submission" date="2006-07" db="EMBL/GenBank/DDBJ databases">
        <title>Expressed sequence tags from an Arachis hypogaea seeds full length cDNA library.</title>
        <authorList>
            <person name="Wan S.B."/>
            <person name="Bi Y.P."/>
            <person name="Shan L."/>
            <person name="Su L."/>
            <person name="Quan X.Q."/>
            <person name="Zhang H.T."/>
            <person name="Zhang X.Q."/>
            <person name="Lu C.X."/>
            <person name="Zhai H.D."/>
            <person name="Xia M."/>
        </authorList>
    </citation>
    <scope>NUCLEOTIDE SEQUENCE [MRNA]</scope>
</reference>
<reference evidence="4" key="2">
    <citation type="journal article" date="2015" name="J. Allergy Clin. Immunol.">
        <title>Peanut defensins: Novel allergens isolated from lipophilic peanut extract.</title>
        <authorList>
            <person name="Petersen A."/>
            <person name="Kull S."/>
            <person name="Rennert S."/>
            <person name="Becker W.M."/>
            <person name="Krause S."/>
            <person name="Ernst M."/>
            <person name="Gutsmann T."/>
            <person name="Bauer J."/>
            <person name="Lindner B."/>
            <person name="Jappe U."/>
        </authorList>
    </citation>
    <scope>PROTEIN SEQUENCE OF 26-72</scope>
    <scope>PROBABLE FUNCTION</scope>
    <scope>PROBABLE DIMERIZATION</scope>
    <scope>LACK OF GLYCOSYLATION</scope>
    <scope>PRESENCE OF DISULFIDE BONDS</scope>
    <scope>MASS SPECTROMETRY</scope>
    <scope>ALLERGEN</scope>
    <scope>IDENTIFICATION BY MASS SPECTROMETRY</scope>
</reference>
<name>DEF3_ARAHY</name>
<keyword id="KW-0020">Allergen</keyword>
<keyword id="KW-0929">Antimicrobial</keyword>
<keyword id="KW-0211">Defensin</keyword>
<keyword id="KW-0903">Direct protein sequencing</keyword>
<keyword id="KW-1015">Disulfide bond</keyword>
<keyword id="KW-0295">Fungicide</keyword>
<keyword id="KW-0732">Signal</keyword>
<accession>C0HJZ1</accession>
<proteinExistence type="evidence at protein level"/>
<organism>
    <name type="scientific">Arachis hypogaea</name>
    <name type="common">Peanut</name>
    <dbReference type="NCBI Taxonomy" id="3818"/>
    <lineage>
        <taxon>Eukaryota</taxon>
        <taxon>Viridiplantae</taxon>
        <taxon>Streptophyta</taxon>
        <taxon>Embryophyta</taxon>
        <taxon>Tracheophyta</taxon>
        <taxon>Spermatophyta</taxon>
        <taxon>Magnoliopsida</taxon>
        <taxon>eudicotyledons</taxon>
        <taxon>Gunneridae</taxon>
        <taxon>Pentapetalae</taxon>
        <taxon>rosids</taxon>
        <taxon>fabids</taxon>
        <taxon>Fabales</taxon>
        <taxon>Fabaceae</taxon>
        <taxon>Papilionoideae</taxon>
        <taxon>50 kb inversion clade</taxon>
        <taxon>dalbergioids sensu lato</taxon>
        <taxon>Dalbergieae</taxon>
        <taxon>Pterocarpus clade</taxon>
        <taxon>Arachis</taxon>
    </lineage>
</organism>
<dbReference type="EMBL" id="EE124955">
    <property type="status" value="NOT_ANNOTATED_CDS"/>
    <property type="molecule type" value="mRNA"/>
</dbReference>
<dbReference type="SMR" id="C0HJZ1"/>
<dbReference type="Allergome" id="10189">
    <property type="allergen name" value="Ara h 13"/>
</dbReference>
<dbReference type="Allergome" id="11916">
    <property type="allergen name" value="Ara h 13.0102"/>
</dbReference>
<dbReference type="EnsemblPlants" id="arahy.Tifrunner.gnm2.ann2.Ah08g259800.1">
    <property type="protein sequence ID" value="arahy.Tifrunner.gnm2.ann2.Ah08g259800.1-CDS"/>
    <property type="gene ID" value="arahy.Tifrunner.gnm2.ann2.Ah08g259800"/>
</dbReference>
<dbReference type="Gramene" id="arahy.Tifrunner.gnm2.ann2.Ah08g259800.1">
    <property type="protein sequence ID" value="arahy.Tifrunner.gnm2.ann2.Ah08g259800.1-CDS"/>
    <property type="gene ID" value="arahy.Tifrunner.gnm2.ann2.Ah08g259800"/>
</dbReference>
<dbReference type="GO" id="GO:0050832">
    <property type="term" value="P:defense response to fungus"/>
    <property type="evidence" value="ECO:0007669"/>
    <property type="project" value="UniProtKB-KW"/>
</dbReference>
<dbReference type="GO" id="GO:0031640">
    <property type="term" value="P:killing of cells of another organism"/>
    <property type="evidence" value="ECO:0007669"/>
    <property type="project" value="UniProtKB-KW"/>
</dbReference>
<dbReference type="Gene3D" id="3.30.30.10">
    <property type="entry name" value="Knottin, scorpion toxin-like"/>
    <property type="match status" value="1"/>
</dbReference>
<dbReference type="InterPro" id="IPR008176">
    <property type="entry name" value="Defensin_plant"/>
</dbReference>
<dbReference type="InterPro" id="IPR003614">
    <property type="entry name" value="Scorpion_toxin-like"/>
</dbReference>
<dbReference type="InterPro" id="IPR036574">
    <property type="entry name" value="Scorpion_toxin-like_sf"/>
</dbReference>
<dbReference type="PANTHER" id="PTHR33147:SF56">
    <property type="entry name" value="DEFENSIN"/>
    <property type="match status" value="1"/>
</dbReference>
<dbReference type="PANTHER" id="PTHR33147">
    <property type="entry name" value="DEFENSIN-LIKE PROTEIN 1"/>
    <property type="match status" value="1"/>
</dbReference>
<dbReference type="Pfam" id="PF00304">
    <property type="entry name" value="Gamma-thionin"/>
    <property type="match status" value="1"/>
</dbReference>
<dbReference type="SMART" id="SM00505">
    <property type="entry name" value="Knot1"/>
    <property type="match status" value="1"/>
</dbReference>
<dbReference type="SUPFAM" id="SSF57095">
    <property type="entry name" value="Scorpion toxin-like"/>
    <property type="match status" value="1"/>
</dbReference>
<dbReference type="PROSITE" id="PS00940">
    <property type="entry name" value="GAMMA_THIONIN"/>
    <property type="match status" value="1"/>
</dbReference>
<protein>
    <recommendedName>
        <fullName evidence="3">Defensin 3</fullName>
    </recommendedName>
    <allergenName evidence="5">Ara h 13.0102</allergenName>
</protein>